<proteinExistence type="inferred from homology"/>
<gene>
    <name type="primary">alr</name>
    <name type="ordered locus">PST_3651</name>
</gene>
<protein>
    <recommendedName>
        <fullName evidence="1">Alanine racemase</fullName>
        <ecNumber evidence="1">5.1.1.1</ecNumber>
    </recommendedName>
</protein>
<comment type="function">
    <text evidence="1">Catalyzes the interconversion of L-alanine and D-alanine. May also act on other amino acids.</text>
</comment>
<comment type="catalytic activity">
    <reaction evidence="1">
        <text>L-alanine = D-alanine</text>
        <dbReference type="Rhea" id="RHEA:20249"/>
        <dbReference type="ChEBI" id="CHEBI:57416"/>
        <dbReference type="ChEBI" id="CHEBI:57972"/>
        <dbReference type="EC" id="5.1.1.1"/>
    </reaction>
</comment>
<comment type="cofactor">
    <cofactor evidence="1">
        <name>pyridoxal 5'-phosphate</name>
        <dbReference type="ChEBI" id="CHEBI:597326"/>
    </cofactor>
</comment>
<comment type="pathway">
    <text evidence="1">Amino-acid biosynthesis; D-alanine biosynthesis; D-alanine from L-alanine: step 1/1.</text>
</comment>
<comment type="similarity">
    <text evidence="1">Belongs to the alanine racemase family.</text>
</comment>
<name>ALR_STUS1</name>
<accession>A4VQM5</accession>
<evidence type="ECO:0000255" key="1">
    <source>
        <dbReference type="HAMAP-Rule" id="MF_01201"/>
    </source>
</evidence>
<reference key="1">
    <citation type="journal article" date="2008" name="Proc. Natl. Acad. Sci. U.S.A.">
        <title>Nitrogen fixation island and rhizosphere competence traits in the genome of root-associated Pseudomonas stutzeri A1501.</title>
        <authorList>
            <person name="Yan Y."/>
            <person name="Yang J."/>
            <person name="Dou Y."/>
            <person name="Chen M."/>
            <person name="Ping S."/>
            <person name="Peng J."/>
            <person name="Lu W."/>
            <person name="Zhang W."/>
            <person name="Yao Z."/>
            <person name="Li H."/>
            <person name="Liu W."/>
            <person name="He S."/>
            <person name="Geng L."/>
            <person name="Zhang X."/>
            <person name="Yang F."/>
            <person name="Yu H."/>
            <person name="Zhan Y."/>
            <person name="Li D."/>
            <person name="Lin Z."/>
            <person name="Wang Y."/>
            <person name="Elmerich C."/>
            <person name="Lin M."/>
            <person name="Jin Q."/>
        </authorList>
    </citation>
    <scope>NUCLEOTIDE SEQUENCE [LARGE SCALE GENOMIC DNA]</scope>
    <source>
        <strain>A1501</strain>
    </source>
</reference>
<organism>
    <name type="scientific">Stutzerimonas stutzeri (strain A1501)</name>
    <name type="common">Pseudomonas stutzeri</name>
    <dbReference type="NCBI Taxonomy" id="379731"/>
    <lineage>
        <taxon>Bacteria</taxon>
        <taxon>Pseudomonadati</taxon>
        <taxon>Pseudomonadota</taxon>
        <taxon>Gammaproteobacteria</taxon>
        <taxon>Pseudomonadales</taxon>
        <taxon>Pseudomonadaceae</taxon>
        <taxon>Stutzerimonas</taxon>
    </lineage>
</organism>
<feature type="chain" id="PRO_1000066030" description="Alanine racemase">
    <location>
        <begin position="1"/>
        <end position="358"/>
    </location>
</feature>
<feature type="active site" description="Proton acceptor; specific for D-alanine" evidence="1">
    <location>
        <position position="34"/>
    </location>
</feature>
<feature type="active site" description="Proton acceptor; specific for L-alanine" evidence="1">
    <location>
        <position position="254"/>
    </location>
</feature>
<feature type="binding site" evidence="1">
    <location>
        <position position="130"/>
    </location>
    <ligand>
        <name>substrate</name>
    </ligand>
</feature>
<feature type="binding site" evidence="1">
    <location>
        <position position="302"/>
    </location>
    <ligand>
        <name>substrate</name>
    </ligand>
</feature>
<feature type="modified residue" description="N6-(pyridoxal phosphate)lysine" evidence="1">
    <location>
        <position position="34"/>
    </location>
</feature>
<keyword id="KW-0413">Isomerase</keyword>
<keyword id="KW-0663">Pyridoxal phosphate</keyword>
<keyword id="KW-1185">Reference proteome</keyword>
<dbReference type="EC" id="5.1.1.1" evidence="1"/>
<dbReference type="EMBL" id="CP000304">
    <property type="protein sequence ID" value="ABP81276.1"/>
    <property type="molecule type" value="Genomic_DNA"/>
</dbReference>
<dbReference type="RefSeq" id="WP_011914670.1">
    <property type="nucleotide sequence ID" value="NC_009434.1"/>
</dbReference>
<dbReference type="SMR" id="A4VQM5"/>
<dbReference type="KEGG" id="psa:PST_3651"/>
<dbReference type="eggNOG" id="COG0787">
    <property type="taxonomic scope" value="Bacteria"/>
</dbReference>
<dbReference type="HOGENOM" id="CLU_028393_1_0_6"/>
<dbReference type="UniPathway" id="UPA00042">
    <property type="reaction ID" value="UER00497"/>
</dbReference>
<dbReference type="Proteomes" id="UP000000233">
    <property type="component" value="Chromosome"/>
</dbReference>
<dbReference type="GO" id="GO:0005829">
    <property type="term" value="C:cytosol"/>
    <property type="evidence" value="ECO:0007669"/>
    <property type="project" value="TreeGrafter"/>
</dbReference>
<dbReference type="GO" id="GO:0008784">
    <property type="term" value="F:alanine racemase activity"/>
    <property type="evidence" value="ECO:0007669"/>
    <property type="project" value="UniProtKB-UniRule"/>
</dbReference>
<dbReference type="GO" id="GO:0030170">
    <property type="term" value="F:pyridoxal phosphate binding"/>
    <property type="evidence" value="ECO:0007669"/>
    <property type="project" value="UniProtKB-UniRule"/>
</dbReference>
<dbReference type="GO" id="GO:0030632">
    <property type="term" value="P:D-alanine biosynthetic process"/>
    <property type="evidence" value="ECO:0007669"/>
    <property type="project" value="UniProtKB-UniRule"/>
</dbReference>
<dbReference type="CDD" id="cd06827">
    <property type="entry name" value="PLPDE_III_AR_proteobact"/>
    <property type="match status" value="1"/>
</dbReference>
<dbReference type="FunFam" id="2.40.37.10:FF:000002">
    <property type="entry name" value="Alanine racemase"/>
    <property type="match status" value="1"/>
</dbReference>
<dbReference type="FunFam" id="3.20.20.10:FF:000002">
    <property type="entry name" value="Alanine racemase"/>
    <property type="match status" value="1"/>
</dbReference>
<dbReference type="Gene3D" id="3.20.20.10">
    <property type="entry name" value="Alanine racemase"/>
    <property type="match status" value="1"/>
</dbReference>
<dbReference type="Gene3D" id="2.40.37.10">
    <property type="entry name" value="Lyase, Ornithine Decarboxylase, Chain A, domain 1"/>
    <property type="match status" value="1"/>
</dbReference>
<dbReference type="HAMAP" id="MF_01201">
    <property type="entry name" value="Ala_racemase"/>
    <property type="match status" value="1"/>
</dbReference>
<dbReference type="InterPro" id="IPR000821">
    <property type="entry name" value="Ala_racemase"/>
</dbReference>
<dbReference type="InterPro" id="IPR009006">
    <property type="entry name" value="Ala_racemase/Decarboxylase_C"/>
</dbReference>
<dbReference type="InterPro" id="IPR011079">
    <property type="entry name" value="Ala_racemase_C"/>
</dbReference>
<dbReference type="InterPro" id="IPR001608">
    <property type="entry name" value="Ala_racemase_N"/>
</dbReference>
<dbReference type="InterPro" id="IPR020622">
    <property type="entry name" value="Ala_racemase_pyridoxalP-BS"/>
</dbReference>
<dbReference type="InterPro" id="IPR029066">
    <property type="entry name" value="PLP-binding_barrel"/>
</dbReference>
<dbReference type="NCBIfam" id="TIGR00492">
    <property type="entry name" value="alr"/>
    <property type="match status" value="1"/>
</dbReference>
<dbReference type="PANTHER" id="PTHR30511">
    <property type="entry name" value="ALANINE RACEMASE"/>
    <property type="match status" value="1"/>
</dbReference>
<dbReference type="PANTHER" id="PTHR30511:SF0">
    <property type="entry name" value="ALANINE RACEMASE, CATABOLIC-RELATED"/>
    <property type="match status" value="1"/>
</dbReference>
<dbReference type="Pfam" id="PF00842">
    <property type="entry name" value="Ala_racemase_C"/>
    <property type="match status" value="1"/>
</dbReference>
<dbReference type="Pfam" id="PF01168">
    <property type="entry name" value="Ala_racemase_N"/>
    <property type="match status" value="1"/>
</dbReference>
<dbReference type="PRINTS" id="PR00992">
    <property type="entry name" value="ALARACEMASE"/>
</dbReference>
<dbReference type="SMART" id="SM01005">
    <property type="entry name" value="Ala_racemase_C"/>
    <property type="match status" value="1"/>
</dbReference>
<dbReference type="SUPFAM" id="SSF50621">
    <property type="entry name" value="Alanine racemase C-terminal domain-like"/>
    <property type="match status" value="1"/>
</dbReference>
<dbReference type="SUPFAM" id="SSF51419">
    <property type="entry name" value="PLP-binding barrel"/>
    <property type="match status" value="1"/>
</dbReference>
<dbReference type="PROSITE" id="PS00395">
    <property type="entry name" value="ALANINE_RACEMASE"/>
    <property type="match status" value="1"/>
</dbReference>
<sequence length="358" mass="38485">MRPLVATVDLTALRHNYLLAKQCAPQRKAFAVVKANAYGHGAPEAVTALREIADGFAVACLEEAEVIRGCAPEARILLLEGCFEPSEYLRAAELGLDIAVQDARQADWLLAADLARPLNVWLKLDSGMHRLGFSVDGLRECHARLKGAAQVGELNLISHFACADERGHALTETQLERYAELLELPFEHCSLANSAAVLTLPQAHMAWIRPGIMLYGATPFAELSARELGLKPVMTLTGALIAVRDVPVGESVGYGASWVAQRPSRIGTVSCGYADGYPRTAPSGTSVVIHGQRVPLAGRVSMDMLAVDLTDLPQAQLGDAVELWGAQMPIDELAQACGTIGYELLTKVTGRVPRRYIG</sequence>